<accession>A1TG42</accession>
<feature type="chain" id="PRO_1000043712" description="GTP cyclohydrolase 1">
    <location>
        <begin position="1"/>
        <end position="202"/>
    </location>
</feature>
<feature type="binding site" evidence="2">
    <location>
        <position position="90"/>
    </location>
    <ligand>
        <name>Zn(2+)</name>
        <dbReference type="ChEBI" id="CHEBI:29105"/>
    </ligand>
</feature>
<feature type="binding site" evidence="2">
    <location>
        <position position="93"/>
    </location>
    <ligand>
        <name>Zn(2+)</name>
        <dbReference type="ChEBI" id="CHEBI:29105"/>
    </ligand>
</feature>
<feature type="binding site" evidence="2">
    <location>
        <position position="163"/>
    </location>
    <ligand>
        <name>Zn(2+)</name>
        <dbReference type="ChEBI" id="CHEBI:29105"/>
    </ligand>
</feature>
<gene>
    <name evidence="2" type="primary">folE</name>
    <name type="ordered locus">Mvan_5371</name>
</gene>
<proteinExistence type="inferred from homology"/>
<evidence type="ECO:0000250" key="1"/>
<evidence type="ECO:0000255" key="2">
    <source>
        <dbReference type="HAMAP-Rule" id="MF_00223"/>
    </source>
</evidence>
<reference key="1">
    <citation type="submission" date="2006-12" db="EMBL/GenBank/DDBJ databases">
        <title>Complete sequence of Mycobacterium vanbaalenii PYR-1.</title>
        <authorList>
            <consortium name="US DOE Joint Genome Institute"/>
            <person name="Copeland A."/>
            <person name="Lucas S."/>
            <person name="Lapidus A."/>
            <person name="Barry K."/>
            <person name="Detter J.C."/>
            <person name="Glavina del Rio T."/>
            <person name="Hammon N."/>
            <person name="Israni S."/>
            <person name="Dalin E."/>
            <person name="Tice H."/>
            <person name="Pitluck S."/>
            <person name="Singan V."/>
            <person name="Schmutz J."/>
            <person name="Larimer F."/>
            <person name="Land M."/>
            <person name="Hauser L."/>
            <person name="Kyrpides N."/>
            <person name="Anderson I.J."/>
            <person name="Miller C."/>
            <person name="Richardson P."/>
        </authorList>
    </citation>
    <scope>NUCLEOTIDE SEQUENCE [LARGE SCALE GENOMIC DNA]</scope>
    <source>
        <strain>DSM 7251 / JCM 13017 / BCRC 16820 / KCTC 9966 / NRRL B-24157 / PYR-1</strain>
    </source>
</reference>
<protein>
    <recommendedName>
        <fullName evidence="2">GTP cyclohydrolase 1</fullName>
        <ecNumber evidence="2">3.5.4.16</ecNumber>
    </recommendedName>
    <alternativeName>
        <fullName evidence="2">GTP cyclohydrolase I</fullName>
        <shortName evidence="2">GTP-CH-I</shortName>
    </alternativeName>
</protein>
<organism>
    <name type="scientific">Mycolicibacterium vanbaalenii (strain DSM 7251 / JCM 13017 / BCRC 16820 / KCTC 9966 / NRRL B-24157 / PYR-1)</name>
    <name type="common">Mycobacterium vanbaalenii</name>
    <dbReference type="NCBI Taxonomy" id="350058"/>
    <lineage>
        <taxon>Bacteria</taxon>
        <taxon>Bacillati</taxon>
        <taxon>Actinomycetota</taxon>
        <taxon>Actinomycetes</taxon>
        <taxon>Mycobacteriales</taxon>
        <taxon>Mycobacteriaceae</taxon>
        <taxon>Mycolicibacterium</taxon>
    </lineage>
</organism>
<dbReference type="EC" id="3.5.4.16" evidence="2"/>
<dbReference type="EMBL" id="CP000511">
    <property type="protein sequence ID" value="ABM16142.1"/>
    <property type="molecule type" value="Genomic_DNA"/>
</dbReference>
<dbReference type="RefSeq" id="WP_011782510.1">
    <property type="nucleotide sequence ID" value="NZ_JACKSD010000082.1"/>
</dbReference>
<dbReference type="SMR" id="A1TG42"/>
<dbReference type="STRING" id="350058.Mvan_5371"/>
<dbReference type="KEGG" id="mva:Mvan_5371"/>
<dbReference type="eggNOG" id="COG0302">
    <property type="taxonomic scope" value="Bacteria"/>
</dbReference>
<dbReference type="HOGENOM" id="CLU_049768_3_3_11"/>
<dbReference type="UniPathway" id="UPA00848">
    <property type="reaction ID" value="UER00151"/>
</dbReference>
<dbReference type="Proteomes" id="UP000009159">
    <property type="component" value="Chromosome"/>
</dbReference>
<dbReference type="GO" id="GO:0005737">
    <property type="term" value="C:cytoplasm"/>
    <property type="evidence" value="ECO:0007669"/>
    <property type="project" value="TreeGrafter"/>
</dbReference>
<dbReference type="GO" id="GO:0005525">
    <property type="term" value="F:GTP binding"/>
    <property type="evidence" value="ECO:0007669"/>
    <property type="project" value="UniProtKB-KW"/>
</dbReference>
<dbReference type="GO" id="GO:0003934">
    <property type="term" value="F:GTP cyclohydrolase I activity"/>
    <property type="evidence" value="ECO:0007669"/>
    <property type="project" value="UniProtKB-UniRule"/>
</dbReference>
<dbReference type="GO" id="GO:0008270">
    <property type="term" value="F:zinc ion binding"/>
    <property type="evidence" value="ECO:0007669"/>
    <property type="project" value="UniProtKB-UniRule"/>
</dbReference>
<dbReference type="GO" id="GO:0006730">
    <property type="term" value="P:one-carbon metabolic process"/>
    <property type="evidence" value="ECO:0007669"/>
    <property type="project" value="UniProtKB-UniRule"/>
</dbReference>
<dbReference type="GO" id="GO:0006729">
    <property type="term" value="P:tetrahydrobiopterin biosynthetic process"/>
    <property type="evidence" value="ECO:0007669"/>
    <property type="project" value="TreeGrafter"/>
</dbReference>
<dbReference type="GO" id="GO:0046654">
    <property type="term" value="P:tetrahydrofolate biosynthetic process"/>
    <property type="evidence" value="ECO:0007669"/>
    <property type="project" value="UniProtKB-UniRule"/>
</dbReference>
<dbReference type="FunFam" id="1.10.286.10:FF:000001">
    <property type="entry name" value="GTP cyclohydrolase 1"/>
    <property type="match status" value="1"/>
</dbReference>
<dbReference type="FunFam" id="3.30.1130.10:FF:000001">
    <property type="entry name" value="GTP cyclohydrolase 1"/>
    <property type="match status" value="1"/>
</dbReference>
<dbReference type="Gene3D" id="1.10.286.10">
    <property type="match status" value="1"/>
</dbReference>
<dbReference type="Gene3D" id="3.30.1130.10">
    <property type="match status" value="1"/>
</dbReference>
<dbReference type="HAMAP" id="MF_00223">
    <property type="entry name" value="FolE"/>
    <property type="match status" value="1"/>
</dbReference>
<dbReference type="InterPro" id="IPR043133">
    <property type="entry name" value="GTP-CH-I_C/QueF"/>
</dbReference>
<dbReference type="InterPro" id="IPR043134">
    <property type="entry name" value="GTP-CH-I_N"/>
</dbReference>
<dbReference type="InterPro" id="IPR001474">
    <property type="entry name" value="GTP_CycHdrlase_I"/>
</dbReference>
<dbReference type="InterPro" id="IPR018234">
    <property type="entry name" value="GTP_CycHdrlase_I_CS"/>
</dbReference>
<dbReference type="InterPro" id="IPR020602">
    <property type="entry name" value="GTP_CycHdrlase_I_dom"/>
</dbReference>
<dbReference type="NCBIfam" id="TIGR00063">
    <property type="entry name" value="folE"/>
    <property type="match status" value="1"/>
</dbReference>
<dbReference type="NCBIfam" id="NF006825">
    <property type="entry name" value="PRK09347.1-2"/>
    <property type="match status" value="1"/>
</dbReference>
<dbReference type="NCBIfam" id="NF006826">
    <property type="entry name" value="PRK09347.1-3"/>
    <property type="match status" value="1"/>
</dbReference>
<dbReference type="PANTHER" id="PTHR11109:SF7">
    <property type="entry name" value="GTP CYCLOHYDROLASE 1"/>
    <property type="match status" value="1"/>
</dbReference>
<dbReference type="PANTHER" id="PTHR11109">
    <property type="entry name" value="GTP CYCLOHYDROLASE I"/>
    <property type="match status" value="1"/>
</dbReference>
<dbReference type="Pfam" id="PF01227">
    <property type="entry name" value="GTP_cyclohydroI"/>
    <property type="match status" value="1"/>
</dbReference>
<dbReference type="SUPFAM" id="SSF55620">
    <property type="entry name" value="Tetrahydrobiopterin biosynthesis enzymes-like"/>
    <property type="match status" value="1"/>
</dbReference>
<dbReference type="PROSITE" id="PS00859">
    <property type="entry name" value="GTP_CYCLOHYDROL_1_1"/>
    <property type="match status" value="1"/>
</dbReference>
<dbReference type="PROSITE" id="PS00860">
    <property type="entry name" value="GTP_CYCLOHYDROL_1_2"/>
    <property type="match status" value="1"/>
</dbReference>
<keyword id="KW-0342">GTP-binding</keyword>
<keyword id="KW-0378">Hydrolase</keyword>
<keyword id="KW-0479">Metal-binding</keyword>
<keyword id="KW-0547">Nucleotide-binding</keyword>
<keyword id="KW-0554">One-carbon metabolism</keyword>
<keyword id="KW-0862">Zinc</keyword>
<sequence length="202" mass="22474">MTRSHNHSATITTARFDQARAEAAVRELLIAVGEDPDREGLRDTPARVARAYQEIFAGLYTDPDEVLKTMFDEQHDEMVLVKDIPMYSTCEHHLVSFHGVAHVGYIPGVDGRVTGLSKLARVVDLYAKRPQVQERLTGQIADALMRRLDPRGVIVVIEAEHLCMAMRGIRKPGAVTTTSAVRGQFKTDKASRAEALDLILRK</sequence>
<comment type="catalytic activity">
    <reaction evidence="2">
        <text>GTP + H2O = 7,8-dihydroneopterin 3'-triphosphate + formate + H(+)</text>
        <dbReference type="Rhea" id="RHEA:17473"/>
        <dbReference type="ChEBI" id="CHEBI:15377"/>
        <dbReference type="ChEBI" id="CHEBI:15378"/>
        <dbReference type="ChEBI" id="CHEBI:15740"/>
        <dbReference type="ChEBI" id="CHEBI:37565"/>
        <dbReference type="ChEBI" id="CHEBI:58462"/>
        <dbReference type="EC" id="3.5.4.16"/>
    </reaction>
</comment>
<comment type="pathway">
    <text evidence="2">Cofactor biosynthesis; 7,8-dihydroneopterin triphosphate biosynthesis; 7,8-dihydroneopterin triphosphate from GTP: step 1/1.</text>
</comment>
<comment type="subunit">
    <text evidence="1">Toroid-shaped homodecamer, composed of two pentamers of five dimers.</text>
</comment>
<comment type="similarity">
    <text evidence="2">Belongs to the GTP cyclohydrolase I family.</text>
</comment>
<name>GCH1_MYCVP</name>